<reference key="1">
    <citation type="journal article" date="2002" name="Nucleic Acids Res.">
        <title>The complete genomic sequence of Mycoplasma penetrans, an intracellular bacterial pathogen in humans.</title>
        <authorList>
            <person name="Sasaki Y."/>
            <person name="Ishikawa J."/>
            <person name="Yamashita A."/>
            <person name="Oshima K."/>
            <person name="Kenri T."/>
            <person name="Furuya K."/>
            <person name="Yoshino C."/>
            <person name="Horino A."/>
            <person name="Shiba T."/>
            <person name="Sasaki T."/>
            <person name="Hattori M."/>
        </authorList>
    </citation>
    <scope>NUCLEOTIDE SEQUENCE [LARGE SCALE GENOMIC DNA]</scope>
    <source>
        <strain>HF-2</strain>
    </source>
</reference>
<protein>
    <recommendedName>
        <fullName>ATP synthase subunit beta</fullName>
        <ecNumber>7.1.2.2</ecNumber>
    </recommendedName>
    <alternativeName>
        <fullName>ATP synthase F1 sector subunit beta</fullName>
    </alternativeName>
    <alternativeName>
        <fullName>F-ATPase subunit beta</fullName>
    </alternativeName>
</protein>
<keyword id="KW-0066">ATP synthesis</keyword>
<keyword id="KW-0067">ATP-binding</keyword>
<keyword id="KW-1003">Cell membrane</keyword>
<keyword id="KW-0139">CF(1)</keyword>
<keyword id="KW-0375">Hydrogen ion transport</keyword>
<keyword id="KW-0406">Ion transport</keyword>
<keyword id="KW-0472">Membrane</keyword>
<keyword id="KW-0547">Nucleotide-binding</keyword>
<keyword id="KW-1185">Reference proteome</keyword>
<keyword id="KW-1278">Translocase</keyword>
<keyword id="KW-0813">Transport</keyword>
<evidence type="ECO:0000250" key="1"/>
<evidence type="ECO:0000305" key="2"/>
<name>ATPB_MALP2</name>
<accession>Q8EWY8</accession>
<sequence length="778" mass="87811">MKENNKTIEAKNKELRDATKEFNEKLQKFLKDKVKKGFQIKNPNYKIDDNKISSNEVFKNNKNDFELNLPKNTWEEKTNKPESFENYKNVIPPYEDKFLPENFKEKFAPKNIKSEPLINKKDNLKEKNNNPVFDEVKIQEDDKFFDFSKFSETVSNQPENILKIEENDFKEIHDDFVSQYETFSKLETKENTNDLKTNLSSDTIKTIESKNEPEVQIESEIKDDSLEKEISEDDSFMDIFKAEQPDNQEDDSFVIDEEKAKEEYQEIKTNKSIVSDSHKIDIYEENEDLMKLNTLKSDKGIIYQIFGPVVDVKFARNQMPNINDCLEVKLPNNKKLVLEVALLEGDDVARCISMGSTEGLYRGLEVINTKNPIMAPVGSAVLGRMFNVVGEPIDNKPMPEKVEYSPIHKKPPSFDEQSTKTEIFETGIKVIDLLVPYVKGGKIGLFGGAGVGKTVLVQELIHNIATGHGGLSIFAGVGERTREGNDLYHEMIDGGVINQTALVFGQMNEPPGARMRVALTALTMAEHFRENNKQDVLLFIDNIFRFSQAGSEVSALLGRIPSAVGYQPTLAFEMGQLQERITSTKSGSITSVQAVYVPADDLTDPAPSTTFAHLDAKTVLDRKIASLGIYPAINPLESSSRMLDPSIVGIEHYKVARSVQTILQKFEELQDIIAILGIDELSEEDKLTVSRARKIRNFLSQPFFVAEKFSHKSGKYVSTQDTISGFSEIIEGKCDDIPEQYFLYVGGIDDVHKNYVAANSNNKVNSSNKPLNSENKSN</sequence>
<gene>
    <name type="primary">atpD</name>
    <name type="ordered locus">MYPE620</name>
</gene>
<proteinExistence type="inferred from homology"/>
<dbReference type="EC" id="7.1.2.2"/>
<dbReference type="EMBL" id="BA000026">
    <property type="protein sequence ID" value="BAC43852.1"/>
    <property type="molecule type" value="Genomic_DNA"/>
</dbReference>
<dbReference type="SMR" id="Q8EWY8"/>
<dbReference type="FunCoup" id="Q8EWY8">
    <property type="interactions" value="188"/>
</dbReference>
<dbReference type="STRING" id="272633.gene:10731153"/>
<dbReference type="KEGG" id="mpe:MYPE620"/>
<dbReference type="eggNOG" id="COG0055">
    <property type="taxonomic scope" value="Bacteria"/>
</dbReference>
<dbReference type="HOGENOM" id="CLU_359749_0_0_14"/>
<dbReference type="InParanoid" id="Q8EWY8"/>
<dbReference type="Proteomes" id="UP000002522">
    <property type="component" value="Chromosome"/>
</dbReference>
<dbReference type="GO" id="GO:0005886">
    <property type="term" value="C:plasma membrane"/>
    <property type="evidence" value="ECO:0007669"/>
    <property type="project" value="UniProtKB-SubCell"/>
</dbReference>
<dbReference type="GO" id="GO:0045259">
    <property type="term" value="C:proton-transporting ATP synthase complex"/>
    <property type="evidence" value="ECO:0007669"/>
    <property type="project" value="UniProtKB-KW"/>
</dbReference>
<dbReference type="GO" id="GO:0005524">
    <property type="term" value="F:ATP binding"/>
    <property type="evidence" value="ECO:0007669"/>
    <property type="project" value="UniProtKB-UniRule"/>
</dbReference>
<dbReference type="GO" id="GO:0016887">
    <property type="term" value="F:ATP hydrolysis activity"/>
    <property type="evidence" value="ECO:0007669"/>
    <property type="project" value="InterPro"/>
</dbReference>
<dbReference type="GO" id="GO:0046933">
    <property type="term" value="F:proton-transporting ATP synthase activity, rotational mechanism"/>
    <property type="evidence" value="ECO:0007669"/>
    <property type="project" value="UniProtKB-UniRule"/>
</dbReference>
<dbReference type="CDD" id="cd18110">
    <property type="entry name" value="ATP-synt_F1_beta_C"/>
    <property type="match status" value="1"/>
</dbReference>
<dbReference type="CDD" id="cd18115">
    <property type="entry name" value="ATP-synt_F1_beta_N"/>
    <property type="match status" value="1"/>
</dbReference>
<dbReference type="CDD" id="cd01133">
    <property type="entry name" value="F1-ATPase_beta_CD"/>
    <property type="match status" value="1"/>
</dbReference>
<dbReference type="FunFam" id="1.10.1140.10:FF:000001">
    <property type="entry name" value="ATP synthase subunit beta"/>
    <property type="match status" value="1"/>
</dbReference>
<dbReference type="FunFam" id="3.40.50.300:FF:000004">
    <property type="entry name" value="ATP synthase subunit beta"/>
    <property type="match status" value="1"/>
</dbReference>
<dbReference type="Gene3D" id="2.40.10.170">
    <property type="match status" value="1"/>
</dbReference>
<dbReference type="Gene3D" id="1.10.1140.10">
    <property type="entry name" value="Bovine Mitochondrial F1-atpase, Atp Synthase Beta Chain, Chain D, domain 3"/>
    <property type="match status" value="1"/>
</dbReference>
<dbReference type="Gene3D" id="3.40.50.300">
    <property type="entry name" value="P-loop containing nucleotide triphosphate hydrolases"/>
    <property type="match status" value="1"/>
</dbReference>
<dbReference type="HAMAP" id="MF_01347">
    <property type="entry name" value="ATP_synth_beta_bact"/>
    <property type="match status" value="1"/>
</dbReference>
<dbReference type="InterPro" id="IPR003593">
    <property type="entry name" value="AAA+_ATPase"/>
</dbReference>
<dbReference type="InterPro" id="IPR055190">
    <property type="entry name" value="ATP-synt_VA_C"/>
</dbReference>
<dbReference type="InterPro" id="IPR005722">
    <property type="entry name" value="ATP_synth_F1_bsu"/>
</dbReference>
<dbReference type="InterPro" id="IPR020003">
    <property type="entry name" value="ATPase_a/bsu_AS"/>
</dbReference>
<dbReference type="InterPro" id="IPR050053">
    <property type="entry name" value="ATPase_alpha/beta_chains"/>
</dbReference>
<dbReference type="InterPro" id="IPR004100">
    <property type="entry name" value="ATPase_F1/V1/A1_a/bsu_N"/>
</dbReference>
<dbReference type="InterPro" id="IPR036121">
    <property type="entry name" value="ATPase_F1/V1/A1_a/bsu_N_sf"/>
</dbReference>
<dbReference type="InterPro" id="IPR000194">
    <property type="entry name" value="ATPase_F1/V1/A1_a/bsu_nucl-bd"/>
</dbReference>
<dbReference type="InterPro" id="IPR024034">
    <property type="entry name" value="ATPase_F1/V1_b/a_C"/>
</dbReference>
<dbReference type="InterPro" id="IPR027417">
    <property type="entry name" value="P-loop_NTPase"/>
</dbReference>
<dbReference type="NCBIfam" id="TIGR01039">
    <property type="entry name" value="atpD"/>
    <property type="match status" value="1"/>
</dbReference>
<dbReference type="PANTHER" id="PTHR15184">
    <property type="entry name" value="ATP SYNTHASE"/>
    <property type="match status" value="1"/>
</dbReference>
<dbReference type="PANTHER" id="PTHR15184:SF71">
    <property type="entry name" value="ATP SYNTHASE SUBUNIT BETA, MITOCHONDRIAL"/>
    <property type="match status" value="1"/>
</dbReference>
<dbReference type="Pfam" id="PF00006">
    <property type="entry name" value="ATP-synt_ab"/>
    <property type="match status" value="1"/>
</dbReference>
<dbReference type="Pfam" id="PF02874">
    <property type="entry name" value="ATP-synt_ab_N"/>
    <property type="match status" value="1"/>
</dbReference>
<dbReference type="Pfam" id="PF22919">
    <property type="entry name" value="ATP-synt_VA_C"/>
    <property type="match status" value="1"/>
</dbReference>
<dbReference type="SMART" id="SM00382">
    <property type="entry name" value="AAA"/>
    <property type="match status" value="1"/>
</dbReference>
<dbReference type="SUPFAM" id="SSF47917">
    <property type="entry name" value="C-terminal domain of alpha and beta subunits of F1 ATP synthase"/>
    <property type="match status" value="1"/>
</dbReference>
<dbReference type="SUPFAM" id="SSF50615">
    <property type="entry name" value="N-terminal domain of alpha and beta subunits of F1 ATP synthase"/>
    <property type="match status" value="1"/>
</dbReference>
<dbReference type="SUPFAM" id="SSF52540">
    <property type="entry name" value="P-loop containing nucleoside triphosphate hydrolases"/>
    <property type="match status" value="1"/>
</dbReference>
<dbReference type="PROSITE" id="PS00152">
    <property type="entry name" value="ATPASE_ALPHA_BETA"/>
    <property type="match status" value="1"/>
</dbReference>
<comment type="function">
    <text evidence="1">Produces ATP from ADP in the presence of a proton gradient across the membrane. The catalytic sites are hosted primarily by the beta subunits (By similarity).</text>
</comment>
<comment type="catalytic activity">
    <reaction>
        <text>ATP + H2O + 4 H(+)(in) = ADP + phosphate + 5 H(+)(out)</text>
        <dbReference type="Rhea" id="RHEA:57720"/>
        <dbReference type="ChEBI" id="CHEBI:15377"/>
        <dbReference type="ChEBI" id="CHEBI:15378"/>
        <dbReference type="ChEBI" id="CHEBI:30616"/>
        <dbReference type="ChEBI" id="CHEBI:43474"/>
        <dbReference type="ChEBI" id="CHEBI:456216"/>
        <dbReference type="EC" id="7.1.2.2"/>
    </reaction>
</comment>
<comment type="subunit">
    <text evidence="1">F-type ATPases have 2 components, CF(1) - the catalytic core - and CF(0) - the membrane proton channel. CF(1) has five subunits: alpha(3), beta(3), gamma(1), delta(1), epsilon(1). CF(0) has three main subunits: a(1), b(2) and c(9-12). The alpha and beta chains form an alternating ring which encloses part of the gamma chain. CF(1) is attached to CF(0) by a central stalk formed by the gamma and epsilon chains, while a peripheral stalk is formed by the delta and b chains (By similarity).</text>
</comment>
<comment type="subcellular location">
    <subcellularLocation>
        <location evidence="1">Cell membrane</location>
        <topology evidence="1">Peripheral membrane protein</topology>
    </subcellularLocation>
</comment>
<comment type="similarity">
    <text evidence="2">Belongs to the ATPase alpha/beta chains family.</text>
</comment>
<feature type="chain" id="PRO_0000254307" description="ATP synthase subunit beta">
    <location>
        <begin position="1"/>
        <end position="778"/>
    </location>
</feature>
<feature type="region of interest" description="Unknown">
    <location>
        <begin position="1"/>
        <end position="289"/>
    </location>
</feature>
<feature type="region of interest" description="ATP synthase subunit beta">
    <location>
        <begin position="290"/>
        <end position="778"/>
    </location>
</feature>
<feature type="binding site" evidence="1">
    <location>
        <begin position="447"/>
        <end position="454"/>
    </location>
    <ligand>
        <name>ATP</name>
        <dbReference type="ChEBI" id="CHEBI:30616"/>
    </ligand>
</feature>
<organism>
    <name type="scientific">Malacoplasma penetrans (strain HF-2)</name>
    <name type="common">Mycoplasma penetrans</name>
    <dbReference type="NCBI Taxonomy" id="272633"/>
    <lineage>
        <taxon>Bacteria</taxon>
        <taxon>Bacillati</taxon>
        <taxon>Mycoplasmatota</taxon>
        <taxon>Mycoplasmoidales</taxon>
        <taxon>Mycoplasmoidaceae</taxon>
        <taxon>Malacoplasma</taxon>
    </lineage>
</organism>